<protein>
    <recommendedName>
        <fullName>Phosphorelay intermediate protein YPD1</fullName>
    </recommendedName>
    <alternativeName>
        <fullName>Histidine-containing phosphotransfer protein YPD1</fullName>
    </alternativeName>
    <alternativeName>
        <fullName>Tyrosine phosphatase-dependent protein 1</fullName>
    </alternativeName>
</protein>
<evidence type="ECO:0000255" key="1">
    <source>
        <dbReference type="PROSITE-ProRule" id="PRU00110"/>
    </source>
</evidence>
<evidence type="ECO:0000269" key="2">
    <source>
    </source>
</evidence>
<evidence type="ECO:0000269" key="3">
    <source>
    </source>
</evidence>
<evidence type="ECO:0000269" key="4">
    <source>
    </source>
</evidence>
<evidence type="ECO:0000269" key="5">
    <source>
    </source>
</evidence>
<evidence type="ECO:0000269" key="6">
    <source>
    </source>
</evidence>
<evidence type="ECO:0000269" key="7">
    <source>
    </source>
</evidence>
<evidence type="ECO:0000269" key="8">
    <source>
    </source>
</evidence>
<evidence type="ECO:0000305" key="9"/>
<evidence type="ECO:0007829" key="10">
    <source>
        <dbReference type="PDB" id="2R25"/>
    </source>
</evidence>
<evidence type="ECO:0007829" key="11">
    <source>
        <dbReference type="PDB" id="6M7W"/>
    </source>
</evidence>
<accession>Q07688</accession>
<accession>D6VRC1</accession>
<feature type="chain" id="PRO_0000262758" description="Phosphorelay intermediate protein YPD1">
    <location>
        <begin position="1"/>
        <end position="167"/>
    </location>
</feature>
<feature type="domain" description="HPt" evidence="1">
    <location>
        <begin position="24"/>
        <end position="129"/>
    </location>
</feature>
<feature type="modified residue" description="Phosphohistidine" evidence="1 7">
    <location>
        <position position="64"/>
    </location>
</feature>
<feature type="mutagenesis site" description="Loss of function." evidence="7">
    <original>H</original>
    <variation>Q</variation>
    <location>
        <position position="64"/>
    </location>
</feature>
<feature type="mutagenesis site" description="Reduces binding of the 4-aspartylphosphate of SLN1." evidence="6">
    <original>K</original>
    <variation>A</variation>
    <location>
        <position position="67"/>
    </location>
</feature>
<feature type="mutagenesis site" description="Reduces phosphoryl transfer rate." evidence="6">
    <original>G</original>
    <variation>Q</variation>
    <location>
        <position position="68"/>
    </location>
</feature>
<feature type="mutagenesis site" description="In NH1; causes resistance to the antifungal antibiotic pradimicin." evidence="5">
    <original>G</original>
    <variation>C</variation>
    <location>
        <position position="74"/>
    </location>
</feature>
<feature type="mutagenesis site" description="Reduces phosphoryl transfer rate." evidence="6">
    <original>Q</original>
    <variation>A</variation>
    <location>
        <position position="86"/>
    </location>
</feature>
<feature type="mutagenesis site" description="Reduces phosphoryl transfer rate." evidence="6">
    <original>R</original>
    <variation>A</variation>
    <location>
        <position position="90"/>
    </location>
</feature>
<feature type="strand" evidence="11">
    <location>
        <begin position="6"/>
        <end position="9"/>
    </location>
</feature>
<feature type="helix" evidence="10">
    <location>
        <begin position="11"/>
        <end position="19"/>
    </location>
</feature>
<feature type="turn" evidence="10">
    <location>
        <begin position="20"/>
        <end position="23"/>
    </location>
</feature>
<feature type="helix" evidence="10">
    <location>
        <begin position="26"/>
        <end position="51"/>
    </location>
</feature>
<feature type="helix" evidence="10">
    <location>
        <begin position="56"/>
        <end position="72"/>
    </location>
</feature>
<feature type="helix" evidence="10">
    <location>
        <begin position="76"/>
        <end position="89"/>
    </location>
</feature>
<feature type="helix" evidence="10">
    <location>
        <begin position="99"/>
        <end position="103"/>
    </location>
</feature>
<feature type="helix" evidence="10">
    <location>
        <begin position="109"/>
        <end position="112"/>
    </location>
</feature>
<feature type="strand" evidence="10">
    <location>
        <begin position="113"/>
        <end position="115"/>
    </location>
</feature>
<feature type="turn" evidence="10">
    <location>
        <begin position="117"/>
        <end position="120"/>
    </location>
</feature>
<feature type="strand" evidence="10">
    <location>
        <begin position="128"/>
        <end position="130"/>
    </location>
</feature>
<feature type="helix" evidence="10">
    <location>
        <begin position="135"/>
        <end position="162"/>
    </location>
</feature>
<gene>
    <name type="primary">YPD1</name>
    <name type="ordered locus">YDL235C</name>
    <name type="ORF">D0790</name>
</gene>
<keyword id="KW-0002">3D-structure</keyword>
<keyword id="KW-0963">Cytoplasm</keyword>
<keyword id="KW-0539">Nucleus</keyword>
<keyword id="KW-0597">Phosphoprotein</keyword>
<keyword id="KW-1185">Reference proteome</keyword>
<keyword id="KW-0902">Two-component regulatory system</keyword>
<reference key="1">
    <citation type="journal article" date="1996" name="Cell">
        <title>Yeast HOG1 MAP kinase cascade is regulated by a multistep phosphorelay mechanism in the SLN1-YPD1-SSK1 two-component osmosensor.</title>
        <authorList>
            <person name="Posas F."/>
            <person name="Wurgler-Murphy S.M."/>
            <person name="Maeda T."/>
            <person name="Witten E.A."/>
            <person name="Thai T.C."/>
            <person name="Saito H."/>
        </authorList>
    </citation>
    <scope>NUCLEOTIDE SEQUENCE [GENOMIC DNA]</scope>
    <scope>MUTAGENESIS OF HIS-64</scope>
    <scope>PHOSPHORYLATION AT HIS-64</scope>
    <scope>INTERACTION WITH SLN1 AND SSK1</scope>
</reference>
<reference key="2">
    <citation type="journal article" date="1997" name="Nature">
        <title>The nucleotide sequence of Saccharomyces cerevisiae chromosome IV.</title>
        <authorList>
            <person name="Jacq C."/>
            <person name="Alt-Moerbe J."/>
            <person name="Andre B."/>
            <person name="Arnold W."/>
            <person name="Bahr A."/>
            <person name="Ballesta J.P.G."/>
            <person name="Bargues M."/>
            <person name="Baron L."/>
            <person name="Becker A."/>
            <person name="Biteau N."/>
            <person name="Bloecker H."/>
            <person name="Blugeon C."/>
            <person name="Boskovic J."/>
            <person name="Brandt P."/>
            <person name="Brueckner M."/>
            <person name="Buitrago M.J."/>
            <person name="Coster F."/>
            <person name="Delaveau T."/>
            <person name="del Rey F."/>
            <person name="Dujon B."/>
            <person name="Eide L.G."/>
            <person name="Garcia-Cantalejo J.M."/>
            <person name="Goffeau A."/>
            <person name="Gomez-Peris A."/>
            <person name="Granotier C."/>
            <person name="Hanemann V."/>
            <person name="Hankeln T."/>
            <person name="Hoheisel J.D."/>
            <person name="Jaeger W."/>
            <person name="Jimenez A."/>
            <person name="Jonniaux J.-L."/>
            <person name="Kraemer C."/>
            <person name="Kuester H."/>
            <person name="Laamanen P."/>
            <person name="Legros Y."/>
            <person name="Louis E.J."/>
            <person name="Moeller-Rieker S."/>
            <person name="Monnet A."/>
            <person name="Moro M."/>
            <person name="Mueller-Auer S."/>
            <person name="Nussbaumer B."/>
            <person name="Paricio N."/>
            <person name="Paulin L."/>
            <person name="Perea J."/>
            <person name="Perez-Alonso M."/>
            <person name="Perez-Ortin J.E."/>
            <person name="Pohl T.M."/>
            <person name="Prydz H."/>
            <person name="Purnelle B."/>
            <person name="Rasmussen S.W."/>
            <person name="Remacha M.A."/>
            <person name="Revuelta J.L."/>
            <person name="Rieger M."/>
            <person name="Salom D."/>
            <person name="Saluz H.P."/>
            <person name="Saiz J.E."/>
            <person name="Saren A.-M."/>
            <person name="Schaefer M."/>
            <person name="Scharfe M."/>
            <person name="Schmidt E.R."/>
            <person name="Schneider C."/>
            <person name="Scholler P."/>
            <person name="Schwarz S."/>
            <person name="Soler-Mira A."/>
            <person name="Urrestarazu L.A."/>
            <person name="Verhasselt P."/>
            <person name="Vissers S."/>
            <person name="Voet M."/>
            <person name="Volckaert G."/>
            <person name="Wagner G."/>
            <person name="Wambutt R."/>
            <person name="Wedler E."/>
            <person name="Wedler H."/>
            <person name="Woelfl S."/>
            <person name="Harris D.E."/>
            <person name="Bowman S."/>
            <person name="Brown D."/>
            <person name="Churcher C.M."/>
            <person name="Connor R."/>
            <person name="Dedman K."/>
            <person name="Gentles S."/>
            <person name="Hamlin N."/>
            <person name="Hunt S."/>
            <person name="Jones L."/>
            <person name="McDonald S."/>
            <person name="Murphy L.D."/>
            <person name="Niblett D."/>
            <person name="Odell C."/>
            <person name="Oliver K."/>
            <person name="Rajandream M.A."/>
            <person name="Richards C."/>
            <person name="Shore L."/>
            <person name="Walsh S.V."/>
            <person name="Barrell B.G."/>
            <person name="Dietrich F.S."/>
            <person name="Mulligan J.T."/>
            <person name="Allen E."/>
            <person name="Araujo R."/>
            <person name="Aviles E."/>
            <person name="Berno A."/>
            <person name="Carpenter J."/>
            <person name="Chen E."/>
            <person name="Cherry J.M."/>
            <person name="Chung E."/>
            <person name="Duncan M."/>
            <person name="Hunicke-Smith S."/>
            <person name="Hyman R.W."/>
            <person name="Komp C."/>
            <person name="Lashkari D."/>
            <person name="Lew H."/>
            <person name="Lin D."/>
            <person name="Mosedale D."/>
            <person name="Nakahara K."/>
            <person name="Namath A."/>
            <person name="Oefner P."/>
            <person name="Oh C."/>
            <person name="Petel F.X."/>
            <person name="Roberts D."/>
            <person name="Schramm S."/>
            <person name="Schroeder M."/>
            <person name="Shogren T."/>
            <person name="Shroff N."/>
            <person name="Winant A."/>
            <person name="Yelton M.A."/>
            <person name="Botstein D."/>
            <person name="Davis R.W."/>
            <person name="Johnston M."/>
            <person name="Andrews S."/>
            <person name="Brinkman R."/>
            <person name="Cooper J."/>
            <person name="Ding H."/>
            <person name="Du Z."/>
            <person name="Favello A."/>
            <person name="Fulton L."/>
            <person name="Gattung S."/>
            <person name="Greco T."/>
            <person name="Hallsworth K."/>
            <person name="Hawkins J."/>
            <person name="Hillier L.W."/>
            <person name="Jier M."/>
            <person name="Johnson D."/>
            <person name="Johnston L."/>
            <person name="Kirsten J."/>
            <person name="Kucaba T."/>
            <person name="Langston Y."/>
            <person name="Latreille P."/>
            <person name="Le T."/>
            <person name="Mardis E."/>
            <person name="Menezes S."/>
            <person name="Miller N."/>
            <person name="Nhan M."/>
            <person name="Pauley A."/>
            <person name="Peluso D."/>
            <person name="Rifkin L."/>
            <person name="Riles L."/>
            <person name="Taich A."/>
            <person name="Trevaskis E."/>
            <person name="Vignati D."/>
            <person name="Wilcox L."/>
            <person name="Wohldman P."/>
            <person name="Vaudin M."/>
            <person name="Wilson R."/>
            <person name="Waterston R."/>
            <person name="Albermann K."/>
            <person name="Hani J."/>
            <person name="Heumann K."/>
            <person name="Kleine K."/>
            <person name="Mewes H.-W."/>
            <person name="Zollner A."/>
            <person name="Zaccaria P."/>
        </authorList>
    </citation>
    <scope>NUCLEOTIDE SEQUENCE [LARGE SCALE GENOMIC DNA]</scope>
    <source>
        <strain>ATCC 204508 / S288c</strain>
    </source>
</reference>
<reference key="3">
    <citation type="journal article" date="2014" name="G3 (Bethesda)">
        <title>The reference genome sequence of Saccharomyces cerevisiae: Then and now.</title>
        <authorList>
            <person name="Engel S.R."/>
            <person name="Dietrich F.S."/>
            <person name="Fisk D.G."/>
            <person name="Binkley G."/>
            <person name="Balakrishnan R."/>
            <person name="Costanzo M.C."/>
            <person name="Dwight S.S."/>
            <person name="Hitz B.C."/>
            <person name="Karra K."/>
            <person name="Nash R.S."/>
            <person name="Weng S."/>
            <person name="Wong E.D."/>
            <person name="Lloyd P."/>
            <person name="Skrzypek M.S."/>
            <person name="Miyasato S.R."/>
            <person name="Simison M."/>
            <person name="Cherry J.M."/>
        </authorList>
    </citation>
    <scope>GENOME REANNOTATION</scope>
    <source>
        <strain>ATCC 204508 / S288c</strain>
    </source>
</reference>
<reference key="4">
    <citation type="journal article" date="1998" name="EMBO J.">
        <title>The yeast histidine protein kinase, Sln1p, mediates phosphotransfer to two response regulators, Ssk1p and Skn7p.</title>
        <authorList>
            <person name="Li S."/>
            <person name="Ault A."/>
            <person name="Malone C.L."/>
            <person name="Raitt D."/>
            <person name="Dean S."/>
            <person name="Johnston L.H."/>
            <person name="Deschenes R.J."/>
            <person name="Fassler J.S."/>
        </authorList>
    </citation>
    <scope>FUNCTION</scope>
</reference>
<reference key="5">
    <citation type="journal article" date="2000" name="J. Bacteriol.">
        <title>Novel role for an HPt domain in stabilizing the phosphorylated state of a response regulator domain.</title>
        <authorList>
            <person name="Janiak-Spens F."/>
            <person name="Sparling D.P."/>
            <person name="West A.H."/>
        </authorList>
    </citation>
    <scope>FUNCTION</scope>
</reference>
<reference key="6">
    <citation type="journal article" date="2003" name="J. Antibiot.">
        <title>Pradimicin-resistance of yeast is caused by a point mutation of the histidine-containing phosphotransfer protein Ypd1.</title>
        <authorList>
            <person name="Hiramoto F."/>
            <person name="Nomura N."/>
            <person name="Furumai T."/>
            <person name="Igarashi Y."/>
            <person name="Oki T."/>
        </authorList>
    </citation>
    <scope>MUTAGENESIS OF GLY-74</scope>
</reference>
<reference key="7">
    <citation type="journal article" date="2003" name="Eukaryot. Cell">
        <title>Saccharomyces cerevisiae histidine phosphotransferase Ypd1p shuttles between the nucleus and cytoplasm for SLN1-dependent phosphorylation of Ssk1p and Skn7p.</title>
        <authorList>
            <person name="Lu J.M.-Y."/>
            <person name="Deschenes R.J."/>
            <person name="Fassler J.S."/>
        </authorList>
    </citation>
    <scope>SUBCELLULAR LOCATION</scope>
</reference>
<reference key="8">
    <citation type="journal article" date="2003" name="Nature">
        <title>Global analysis of protein localization in budding yeast.</title>
        <authorList>
            <person name="Huh W.-K."/>
            <person name="Falvo J.V."/>
            <person name="Gerke L.C."/>
            <person name="Carroll A.S."/>
            <person name="Howson R.W."/>
            <person name="Weissman J.S."/>
            <person name="O'Shea E.K."/>
        </authorList>
    </citation>
    <scope>SUBCELLULAR LOCATION [LARGE SCALE ANALYSIS]</scope>
</reference>
<reference key="9">
    <citation type="journal article" date="2003" name="Nature">
        <title>Global analysis of protein expression in yeast.</title>
        <authorList>
            <person name="Ghaemmaghami S."/>
            <person name="Huh W.-K."/>
            <person name="Bower K."/>
            <person name="Howson R.W."/>
            <person name="Belle A."/>
            <person name="Dephoure N."/>
            <person name="O'Shea E.K."/>
            <person name="Weissman J.S."/>
        </authorList>
    </citation>
    <scope>LEVEL OF PROTEIN EXPRESSION [LARGE SCALE ANALYSIS]</scope>
</reference>
<reference key="10">
    <citation type="journal article" date="2005" name="Biochemistry">
        <title>Kinetic analysis of YPD1-dependent phosphotransfer reactions in the yeast osmoregulatory phosphorelay system.</title>
        <authorList>
            <person name="Janiak-Spens F."/>
            <person name="Cook P.F."/>
            <person name="West A.H."/>
        </authorList>
    </citation>
    <scope>CHARACTERIZATION</scope>
    <scope>MUTAGENESIS OF LYS-67; GLY-68; GLN-86 AND ARG-90</scope>
</reference>
<reference key="11">
    <citation type="journal article" date="1999" name="J. Mol. Biol.">
        <title>Conservation of structure and function among histidine-containing phosphotransfer (HPt) domains as revealed by the crystal structure of YPD1.</title>
        <authorList>
            <person name="Xu Q."/>
            <person name="West A.H."/>
        </authorList>
    </citation>
    <scope>X-RAY CRYSTALLOGRAPHY (2.7 ANGSTROMS) OF 3-167</scope>
</reference>
<reference key="12">
    <citation type="journal article" date="1999" name="J. Mol. Biol.">
        <title>Insights into eukaryotic multistep phosphorelay signal transduction revealed by the crystal structure of Ypd1p from Saccharomyces cerevisiae.</title>
        <authorList>
            <person name="Song H.K."/>
            <person name="Lee J.Y."/>
            <person name="Lee M.G."/>
            <person name="Moon J."/>
            <person name="Min K."/>
            <person name="Yang J.K."/>
            <person name="Suh S.W."/>
        </authorList>
    </citation>
    <scope>X-RAY CRYSTALLOGRAPHY (1.8 ANGSTROMS)</scope>
</reference>
<reference key="13">
    <citation type="journal article" date="2003" name="Structure">
        <title>The yeast YPD1/SLN1 complex: insights into molecular recognition in two-component signaling systems.</title>
        <authorList>
            <person name="Xu Q."/>
            <person name="Porter S.W."/>
            <person name="West A.H."/>
        </authorList>
    </citation>
    <scope>X-RAY CRYSTALLOGRAPHY (2.1 ANGSTROMS) OF 2-167 IN COMPLEX WITH SLN1</scope>
</reference>
<sequence>MSTIPSEIINWTILNEIISMDDDDSDFSKGLIIQFIDQAQTTFAQMQRQLDGEKNLTELDNLGHFLKGSSAALGLQRIAWVCERIQNLGRKMEHFFPNKTELVNTLSDKSIINGINIDEDDEEIKIQVDDKDENSIYLILIAKALNQSRLEFKLARIELSKYYNTNL</sequence>
<proteinExistence type="evidence at protein level"/>
<dbReference type="EMBL" id="U62016">
    <property type="protein sequence ID" value="AAC49440.1"/>
    <property type="molecule type" value="Genomic_DNA"/>
</dbReference>
<dbReference type="EMBL" id="Z74283">
    <property type="protein sequence ID" value="CAA98815.1"/>
    <property type="molecule type" value="Genomic_DNA"/>
</dbReference>
<dbReference type="EMBL" id="BK006938">
    <property type="protein sequence ID" value="DAA11631.1"/>
    <property type="molecule type" value="Genomic_DNA"/>
</dbReference>
<dbReference type="PIR" id="S67799">
    <property type="entry name" value="S67799"/>
</dbReference>
<dbReference type="RefSeq" id="NP_010046.1">
    <property type="nucleotide sequence ID" value="NM_001180295.1"/>
</dbReference>
<dbReference type="PDB" id="1C02">
    <property type="method" value="X-ray"/>
    <property type="resolution" value="1.80 A"/>
    <property type="chains" value="A/B=2-167"/>
</dbReference>
<dbReference type="PDB" id="1C03">
    <property type="method" value="X-ray"/>
    <property type="resolution" value="2.30 A"/>
    <property type="chains" value="A/B/C/D=1-167"/>
</dbReference>
<dbReference type="PDB" id="1OXB">
    <property type="method" value="X-ray"/>
    <property type="resolution" value="2.30 A"/>
    <property type="chains" value="A=2-167"/>
</dbReference>
<dbReference type="PDB" id="1OXK">
    <property type="method" value="X-ray"/>
    <property type="resolution" value="2.10 A"/>
    <property type="chains" value="A/C/E/G/I/K=2-167"/>
</dbReference>
<dbReference type="PDB" id="1QSP">
    <property type="method" value="X-ray"/>
    <property type="resolution" value="2.70 A"/>
    <property type="chains" value="A/B=3-167"/>
</dbReference>
<dbReference type="PDB" id="2R25">
    <property type="method" value="X-ray"/>
    <property type="resolution" value="1.70 A"/>
    <property type="chains" value="A=1-167"/>
</dbReference>
<dbReference type="PDB" id="5KBX">
    <property type="method" value="X-ray"/>
    <property type="resolution" value="2.80 A"/>
    <property type="chains" value="A=1-167"/>
</dbReference>
<dbReference type="PDB" id="6M7W">
    <property type="method" value="X-ray"/>
    <property type="resolution" value="1.98 A"/>
    <property type="chains" value="A=1-167"/>
</dbReference>
<dbReference type="PDBsum" id="1C02"/>
<dbReference type="PDBsum" id="1C03"/>
<dbReference type="PDBsum" id="1OXB"/>
<dbReference type="PDBsum" id="1OXK"/>
<dbReference type="PDBsum" id="1QSP"/>
<dbReference type="PDBsum" id="2R25"/>
<dbReference type="PDBsum" id="5KBX"/>
<dbReference type="PDBsum" id="6M7W"/>
<dbReference type="SMR" id="Q07688"/>
<dbReference type="BioGRID" id="31876">
    <property type="interactions" value="103"/>
</dbReference>
<dbReference type="DIP" id="DIP-5899N"/>
<dbReference type="FunCoup" id="Q07688">
    <property type="interactions" value="184"/>
</dbReference>
<dbReference type="IntAct" id="Q07688">
    <property type="interactions" value="4"/>
</dbReference>
<dbReference type="MINT" id="Q07688"/>
<dbReference type="STRING" id="4932.YDL235C"/>
<dbReference type="iPTMnet" id="Q07688"/>
<dbReference type="PaxDb" id="4932-YDL235C"/>
<dbReference type="PeptideAtlas" id="Q07688"/>
<dbReference type="TopDownProteomics" id="Q07688"/>
<dbReference type="EnsemblFungi" id="YDL235C_mRNA">
    <property type="protein sequence ID" value="YDL235C"/>
    <property type="gene ID" value="YDL235C"/>
</dbReference>
<dbReference type="GeneID" id="851363"/>
<dbReference type="KEGG" id="sce:YDL235C"/>
<dbReference type="AGR" id="SGD:S000002394"/>
<dbReference type="SGD" id="S000002394">
    <property type="gene designation" value="YPD1"/>
</dbReference>
<dbReference type="VEuPathDB" id="FungiDB:YDL235C"/>
<dbReference type="eggNOG" id="KOG4747">
    <property type="taxonomic scope" value="Eukaryota"/>
</dbReference>
<dbReference type="HOGENOM" id="CLU_085158_2_0_1"/>
<dbReference type="InParanoid" id="Q07688"/>
<dbReference type="OMA" id="QTFKKMD"/>
<dbReference type="OrthoDB" id="1673781at2759"/>
<dbReference type="BioCyc" id="YEAST:G3O-29613-MONOMER"/>
<dbReference type="BioGRID-ORCS" id="851363">
    <property type="hits" value="0 hits in 10 CRISPR screens"/>
</dbReference>
<dbReference type="EvolutionaryTrace" id="Q07688"/>
<dbReference type="PRO" id="PR:Q07688"/>
<dbReference type="Proteomes" id="UP000002311">
    <property type="component" value="Chromosome IV"/>
</dbReference>
<dbReference type="RNAct" id="Q07688">
    <property type="molecule type" value="protein"/>
</dbReference>
<dbReference type="GO" id="GO:0005737">
    <property type="term" value="C:cytoplasm"/>
    <property type="evidence" value="ECO:0000314"/>
    <property type="project" value="SGD"/>
</dbReference>
<dbReference type="GO" id="GO:0005634">
    <property type="term" value="C:nucleus"/>
    <property type="evidence" value="ECO:0000314"/>
    <property type="project" value="SGD"/>
</dbReference>
<dbReference type="GO" id="GO:0009927">
    <property type="term" value="F:histidine phosphotransfer kinase activity"/>
    <property type="evidence" value="ECO:0000318"/>
    <property type="project" value="GO_Central"/>
</dbReference>
<dbReference type="GO" id="GO:0043424">
    <property type="term" value="F:protein histidine kinase binding"/>
    <property type="evidence" value="ECO:0000353"/>
    <property type="project" value="SGD"/>
</dbReference>
<dbReference type="GO" id="GO:0016772">
    <property type="term" value="F:transferase activity, transferring phosphorus-containing groups"/>
    <property type="evidence" value="ECO:0000314"/>
    <property type="project" value="SGD"/>
</dbReference>
<dbReference type="GO" id="GO:0007234">
    <property type="term" value="P:osmosensory signaling via phosphorelay pathway"/>
    <property type="evidence" value="ECO:0000314"/>
    <property type="project" value="SGD"/>
</dbReference>
<dbReference type="GO" id="GO:0000160">
    <property type="term" value="P:phosphorelay signal transduction system"/>
    <property type="evidence" value="ECO:0000318"/>
    <property type="project" value="GO_Central"/>
</dbReference>
<dbReference type="CDD" id="cd00088">
    <property type="entry name" value="HPT"/>
    <property type="match status" value="1"/>
</dbReference>
<dbReference type="FunFam" id="1.20.120.160:FF:000010">
    <property type="entry name" value="Phosphorelay intermediate protein YPD1"/>
    <property type="match status" value="1"/>
</dbReference>
<dbReference type="Gene3D" id="1.20.120.160">
    <property type="entry name" value="HPT domain"/>
    <property type="match status" value="1"/>
</dbReference>
<dbReference type="InterPro" id="IPR045871">
    <property type="entry name" value="AHP1-5/YPD1"/>
</dbReference>
<dbReference type="InterPro" id="IPR036641">
    <property type="entry name" value="HPT_dom_sf"/>
</dbReference>
<dbReference type="InterPro" id="IPR008207">
    <property type="entry name" value="Sig_transdc_His_kin_Hpt_dom"/>
</dbReference>
<dbReference type="PANTHER" id="PTHR28242">
    <property type="entry name" value="PHOSPHORELAY INTERMEDIATE PROTEIN YPD1"/>
    <property type="match status" value="1"/>
</dbReference>
<dbReference type="PANTHER" id="PTHR28242:SF52">
    <property type="entry name" value="PHOSPHORELAY INTERMEDIATE PROTEIN YPD1"/>
    <property type="match status" value="1"/>
</dbReference>
<dbReference type="Pfam" id="PF01627">
    <property type="entry name" value="Hpt"/>
    <property type="match status" value="1"/>
</dbReference>
<dbReference type="SMART" id="SM00073">
    <property type="entry name" value="HPT"/>
    <property type="match status" value="1"/>
</dbReference>
<dbReference type="SUPFAM" id="SSF47226">
    <property type="entry name" value="Histidine-containing phosphotransfer domain, HPT domain"/>
    <property type="match status" value="1"/>
</dbReference>
<dbReference type="PROSITE" id="PS50894">
    <property type="entry name" value="HPT"/>
    <property type="match status" value="1"/>
</dbReference>
<name>YPD1_YEAST</name>
<comment type="function">
    <text evidence="2 8">Phosphorelay intermediate protein that is part of the branched SLN1-YPD1-SKN7/SSK1 two-component regulatory system, which controls activity of the HOG1 pathway and gene expression in response to changes in the osmolarity of the extracellular environment. Catalyzes the phosphoryl group transfer from the membrane-bound osmosensing histidine kinase SLN1 to two distinct response regulator proteins, SSK1 in the cytoplasm, and transcription factor SKN7 in the nucleus.</text>
</comment>
<comment type="subunit">
    <text evidence="4 7">Interacts with the response regulatory domains of SLN1 and SSK1.</text>
</comment>
<comment type="interaction">
    <interactant intactId="EBI-34423">
        <id>Q07688</id>
    </interactant>
    <interactant intactId="EBI-17357">
        <id>P39928</id>
        <label>SLN1</label>
    </interactant>
    <organismsDiffer>false</organismsDiffer>
    <experiments>2</experiments>
</comment>
<comment type="interaction">
    <interactant intactId="EBI-34423">
        <id>Q07688</id>
    </interactant>
    <interactant intactId="EBI-18184">
        <id>Q07084</id>
        <label>SSK1</label>
    </interactant>
    <organismsDiffer>false</organismsDiffer>
    <experiments>3</experiments>
</comment>
<comment type="subcellular location">
    <subcellularLocation>
        <location>Cytoplasm</location>
    </subcellularLocation>
    <subcellularLocation>
        <location>Nucleus</location>
    </subcellularLocation>
    <text>Localizes constitutively to the cytoplasm and the nucleus, independent on osmotic conditions and phosphorylation status of the protein.</text>
</comment>
<comment type="PTM">
    <text>The phosphorelay mechanism involves the sequential transfer of a phosphate group from 'His-576' (H1) to 'Asp-1144' (D1) of SLN1, then to His-64 (H2) of YPD1 and finally to 'Asp-554' (D2) of SSK1 or 'Asp-427' (D2) of SKN7.</text>
</comment>
<comment type="miscellaneous">
    <text evidence="3">Present with 6330 molecules/cell in log phase SD medium.</text>
</comment>
<comment type="similarity">
    <text evidence="9">Belongs to the YPD1 family.</text>
</comment>
<organism>
    <name type="scientific">Saccharomyces cerevisiae (strain ATCC 204508 / S288c)</name>
    <name type="common">Baker's yeast</name>
    <dbReference type="NCBI Taxonomy" id="559292"/>
    <lineage>
        <taxon>Eukaryota</taxon>
        <taxon>Fungi</taxon>
        <taxon>Dikarya</taxon>
        <taxon>Ascomycota</taxon>
        <taxon>Saccharomycotina</taxon>
        <taxon>Saccharomycetes</taxon>
        <taxon>Saccharomycetales</taxon>
        <taxon>Saccharomycetaceae</taxon>
        <taxon>Saccharomyces</taxon>
    </lineage>
</organism>